<feature type="chain" id="PRO_1000190207" description="Glycine dehydrogenase (decarboxylating)">
    <location>
        <begin position="1"/>
        <end position="975"/>
    </location>
</feature>
<feature type="modified residue" description="N6-(pyridoxal phosphate)lysine" evidence="1">
    <location>
        <position position="723"/>
    </location>
</feature>
<reference key="1">
    <citation type="submission" date="2008-04" db="EMBL/GenBank/DDBJ databases">
        <title>Complete sequence of chromosome 1 of Burkholderia ambifaria MC40-6.</title>
        <authorList>
            <person name="Copeland A."/>
            <person name="Lucas S."/>
            <person name="Lapidus A."/>
            <person name="Glavina del Rio T."/>
            <person name="Dalin E."/>
            <person name="Tice H."/>
            <person name="Pitluck S."/>
            <person name="Chain P."/>
            <person name="Malfatti S."/>
            <person name="Shin M."/>
            <person name="Vergez L."/>
            <person name="Lang D."/>
            <person name="Schmutz J."/>
            <person name="Larimer F."/>
            <person name="Land M."/>
            <person name="Hauser L."/>
            <person name="Kyrpides N."/>
            <person name="Lykidis A."/>
            <person name="Ramette A."/>
            <person name="Konstantinidis K."/>
            <person name="Tiedje J."/>
            <person name="Richardson P."/>
        </authorList>
    </citation>
    <scope>NUCLEOTIDE SEQUENCE [LARGE SCALE GENOMIC DNA]</scope>
    <source>
        <strain>MC40-6</strain>
    </source>
</reference>
<name>GCSP_BURA4</name>
<comment type="function">
    <text evidence="1">The glycine cleavage system catalyzes the degradation of glycine. The P protein binds the alpha-amino group of glycine through its pyridoxal phosphate cofactor; CO(2) is released and the remaining methylamine moiety is then transferred to the lipoamide cofactor of the H protein.</text>
</comment>
<comment type="catalytic activity">
    <reaction evidence="1">
        <text>N(6)-[(R)-lipoyl]-L-lysyl-[glycine-cleavage complex H protein] + glycine + H(+) = N(6)-[(R)-S(8)-aminomethyldihydrolipoyl]-L-lysyl-[glycine-cleavage complex H protein] + CO2</text>
        <dbReference type="Rhea" id="RHEA:24304"/>
        <dbReference type="Rhea" id="RHEA-COMP:10494"/>
        <dbReference type="Rhea" id="RHEA-COMP:10495"/>
        <dbReference type="ChEBI" id="CHEBI:15378"/>
        <dbReference type="ChEBI" id="CHEBI:16526"/>
        <dbReference type="ChEBI" id="CHEBI:57305"/>
        <dbReference type="ChEBI" id="CHEBI:83099"/>
        <dbReference type="ChEBI" id="CHEBI:83143"/>
        <dbReference type="EC" id="1.4.4.2"/>
    </reaction>
</comment>
<comment type="cofactor">
    <cofactor evidence="1">
        <name>pyridoxal 5'-phosphate</name>
        <dbReference type="ChEBI" id="CHEBI:597326"/>
    </cofactor>
</comment>
<comment type="subunit">
    <text evidence="1">The glycine cleavage system is composed of four proteins: P, T, L and H.</text>
</comment>
<comment type="similarity">
    <text evidence="1">Belongs to the GcvP family.</text>
</comment>
<sequence length="975" mass="104289">MKLEHPDRLMNRTPLSLAALETHDAFAERHIGPDAASQQAMLDTLGFASRAALIDAVIPASIRRAETLPLGPFAQPKSEAEALAALRALADKNQVFRSYIGQGYHDTHTPAVILRNVLENPAWYTAYTPYQPEISQGRLEALLNFQQMVADLTGLAISNASLLDEATAAAEAMTLLQRTGKPASNVFYVADDVLPQTLEVIRTRALPIGIEVKTGPAADAAQANAFGVLLQYPGVNGDVRDYRALTEAIHAAGGHVVVAADLLALTVLTPPGEWGADVAVGNTQRFGVPMGFGGPHAAYLAVRDEFKRQMPGRLVGVTVDAQGKPALRLALQTREQHIRREKATSNVCTAQALLAIMASMYAVYHGPHGLKTIALRVNRIAALFAAGVKQLGFATVNDTFFDTLTIDTGARTAQVHEFAKARRINLRRVSATQVGVSFDETTTRDDLAALLAVFAQAAGGTAPSVDALDAGAAGVAALPAGLERTSAYLTHHVFNRHHSETEMLRYLRSLSDKDLALDRSMIPLGSCTMKLNATSEMLPVTWPEFGRIHPFAPAEQTVGYREMIDQLEQMLVAATGYAAVSLQPNAGSQGEYAGLLIIHAYHASRGEAHRDVCLIPASAHGTNPASAHMAGMKVVVVACDAQGNVDIADLKAKAEQHANDLAAIMITYPSTHGVFEQNVREICEIVHAHGGQVYVDGANMNAMVGLTAPGQFGGDVSHLNLHKTFCIPHGGGGPGVGPVAVGAHLAKFLPNQRSTGYTREEDGIGAVSAAPYGSASILPISWMYIAMMGAKNLTAATETAILNANYIAKRLAPHYPVLYSGPGGLVAHECILDLRPIKETSGISVDDVAKRLMDYGFHAPTMSFPVPGTLMVEPTESESQEELDRFIAAMIAIREEIRAVEEGRADREDNPLRHAPHTAAVVTANEWPHAYSREQAAYPVASLGTNKYWPPVGRADNAYGDRNLFCSCVPMSDYA</sequence>
<gene>
    <name evidence="1" type="primary">gcvP</name>
    <name type="ordered locus">BamMC406_0143</name>
</gene>
<evidence type="ECO:0000255" key="1">
    <source>
        <dbReference type="HAMAP-Rule" id="MF_00711"/>
    </source>
</evidence>
<proteinExistence type="inferred from homology"/>
<keyword id="KW-0560">Oxidoreductase</keyword>
<keyword id="KW-0663">Pyridoxal phosphate</keyword>
<protein>
    <recommendedName>
        <fullName evidence="1">Glycine dehydrogenase (decarboxylating)</fullName>
        <ecNumber evidence="1">1.4.4.2</ecNumber>
    </recommendedName>
    <alternativeName>
        <fullName evidence="1">Glycine cleavage system P-protein</fullName>
    </alternativeName>
    <alternativeName>
        <fullName evidence="1">Glycine decarboxylase</fullName>
    </alternativeName>
    <alternativeName>
        <fullName evidence="1">Glycine dehydrogenase (aminomethyl-transferring)</fullName>
    </alternativeName>
</protein>
<accession>B1YQQ1</accession>
<organism>
    <name type="scientific">Burkholderia ambifaria (strain MC40-6)</name>
    <dbReference type="NCBI Taxonomy" id="398577"/>
    <lineage>
        <taxon>Bacteria</taxon>
        <taxon>Pseudomonadati</taxon>
        <taxon>Pseudomonadota</taxon>
        <taxon>Betaproteobacteria</taxon>
        <taxon>Burkholderiales</taxon>
        <taxon>Burkholderiaceae</taxon>
        <taxon>Burkholderia</taxon>
        <taxon>Burkholderia cepacia complex</taxon>
    </lineage>
</organism>
<dbReference type="EC" id="1.4.4.2" evidence="1"/>
<dbReference type="EMBL" id="CP001025">
    <property type="protein sequence ID" value="ACB62645.1"/>
    <property type="molecule type" value="Genomic_DNA"/>
</dbReference>
<dbReference type="RefSeq" id="WP_012362797.1">
    <property type="nucleotide sequence ID" value="NC_010551.1"/>
</dbReference>
<dbReference type="SMR" id="B1YQQ1"/>
<dbReference type="KEGG" id="bac:BamMC406_0143"/>
<dbReference type="HOGENOM" id="CLU_004620_2_1_4"/>
<dbReference type="OrthoDB" id="9801272at2"/>
<dbReference type="Proteomes" id="UP000001680">
    <property type="component" value="Chromosome 1"/>
</dbReference>
<dbReference type="GO" id="GO:0005829">
    <property type="term" value="C:cytosol"/>
    <property type="evidence" value="ECO:0007669"/>
    <property type="project" value="TreeGrafter"/>
</dbReference>
<dbReference type="GO" id="GO:0005960">
    <property type="term" value="C:glycine cleavage complex"/>
    <property type="evidence" value="ECO:0007669"/>
    <property type="project" value="TreeGrafter"/>
</dbReference>
<dbReference type="GO" id="GO:0016594">
    <property type="term" value="F:glycine binding"/>
    <property type="evidence" value="ECO:0007669"/>
    <property type="project" value="TreeGrafter"/>
</dbReference>
<dbReference type="GO" id="GO:0004375">
    <property type="term" value="F:glycine dehydrogenase (decarboxylating) activity"/>
    <property type="evidence" value="ECO:0007669"/>
    <property type="project" value="UniProtKB-EC"/>
</dbReference>
<dbReference type="GO" id="GO:0030170">
    <property type="term" value="F:pyridoxal phosphate binding"/>
    <property type="evidence" value="ECO:0007669"/>
    <property type="project" value="TreeGrafter"/>
</dbReference>
<dbReference type="GO" id="GO:0019464">
    <property type="term" value="P:glycine decarboxylation via glycine cleavage system"/>
    <property type="evidence" value="ECO:0007669"/>
    <property type="project" value="UniProtKB-UniRule"/>
</dbReference>
<dbReference type="CDD" id="cd00613">
    <property type="entry name" value="GDC-P"/>
    <property type="match status" value="2"/>
</dbReference>
<dbReference type="FunFam" id="3.40.640.10:FF:000005">
    <property type="entry name" value="Glycine dehydrogenase (decarboxylating), mitochondrial"/>
    <property type="match status" value="1"/>
</dbReference>
<dbReference type="FunFam" id="3.90.1150.10:FF:000007">
    <property type="entry name" value="Glycine dehydrogenase (decarboxylating), mitochondrial"/>
    <property type="match status" value="1"/>
</dbReference>
<dbReference type="FunFam" id="3.40.640.10:FF:000007">
    <property type="entry name" value="glycine dehydrogenase (Decarboxylating), mitochondrial"/>
    <property type="match status" value="1"/>
</dbReference>
<dbReference type="Gene3D" id="3.90.1150.10">
    <property type="entry name" value="Aspartate Aminotransferase, domain 1"/>
    <property type="match status" value="2"/>
</dbReference>
<dbReference type="Gene3D" id="3.40.640.10">
    <property type="entry name" value="Type I PLP-dependent aspartate aminotransferase-like (Major domain)"/>
    <property type="match status" value="2"/>
</dbReference>
<dbReference type="HAMAP" id="MF_00711">
    <property type="entry name" value="GcvP"/>
    <property type="match status" value="1"/>
</dbReference>
<dbReference type="InterPro" id="IPR003437">
    <property type="entry name" value="GcvP"/>
</dbReference>
<dbReference type="InterPro" id="IPR049316">
    <property type="entry name" value="GDC-P_C"/>
</dbReference>
<dbReference type="InterPro" id="IPR049315">
    <property type="entry name" value="GDC-P_N"/>
</dbReference>
<dbReference type="InterPro" id="IPR020581">
    <property type="entry name" value="GDC_P"/>
</dbReference>
<dbReference type="InterPro" id="IPR015424">
    <property type="entry name" value="PyrdxlP-dep_Trfase"/>
</dbReference>
<dbReference type="InterPro" id="IPR015421">
    <property type="entry name" value="PyrdxlP-dep_Trfase_major"/>
</dbReference>
<dbReference type="InterPro" id="IPR015422">
    <property type="entry name" value="PyrdxlP-dep_Trfase_small"/>
</dbReference>
<dbReference type="NCBIfam" id="TIGR00461">
    <property type="entry name" value="gcvP"/>
    <property type="match status" value="1"/>
</dbReference>
<dbReference type="NCBIfam" id="NF003346">
    <property type="entry name" value="PRK04366.1"/>
    <property type="match status" value="1"/>
</dbReference>
<dbReference type="PANTHER" id="PTHR11773:SF1">
    <property type="entry name" value="GLYCINE DEHYDROGENASE (DECARBOXYLATING), MITOCHONDRIAL"/>
    <property type="match status" value="1"/>
</dbReference>
<dbReference type="PANTHER" id="PTHR11773">
    <property type="entry name" value="GLYCINE DEHYDROGENASE, DECARBOXYLATING"/>
    <property type="match status" value="1"/>
</dbReference>
<dbReference type="Pfam" id="PF21478">
    <property type="entry name" value="GcvP2_C"/>
    <property type="match status" value="1"/>
</dbReference>
<dbReference type="Pfam" id="PF02347">
    <property type="entry name" value="GDC-P"/>
    <property type="match status" value="2"/>
</dbReference>
<dbReference type="SUPFAM" id="SSF53383">
    <property type="entry name" value="PLP-dependent transferases"/>
    <property type="match status" value="2"/>
</dbReference>